<keyword id="KW-0002">3D-structure</keyword>
<keyword id="KW-0180">Complement pathway</keyword>
<keyword id="KW-0204">Cytolysis</keyword>
<keyword id="KW-0903">Direct protein sequencing</keyword>
<keyword id="KW-1015">Disulfide bond</keyword>
<keyword id="KW-0245">EGF-like domain</keyword>
<keyword id="KW-0325">Glycoprotein</keyword>
<keyword id="KW-0391">Immunity</keyword>
<keyword id="KW-0399">Innate immunity</keyword>
<keyword id="KW-0472">Membrane</keyword>
<keyword id="KW-0473">Membrane attack complex</keyword>
<keyword id="KW-1267">Proteomics identification</keyword>
<keyword id="KW-1185">Reference proteome</keyword>
<keyword id="KW-0677">Repeat</keyword>
<keyword id="KW-0964">Secreted</keyword>
<keyword id="KW-0732">Signal</keyword>
<keyword id="KW-0768">Sushi</keyword>
<keyword id="KW-1052">Target cell membrane</keyword>
<keyword id="KW-1053">Target membrane</keyword>
<keyword id="KW-0812">Transmembrane</keyword>
<keyword id="KW-1134">Transmembrane beta strand</keyword>
<gene>
    <name evidence="26 29" type="primary">C6</name>
</gene>
<feature type="signal peptide" evidence="17">
    <location>
        <begin position="1"/>
        <end position="21"/>
    </location>
</feature>
<feature type="chain" id="PRO_0000023579" description="Complement component C6">
    <location>
        <begin position="22"/>
        <end position="934"/>
    </location>
</feature>
<feature type="transmembrane region" description="Beta stranded" evidence="18 34">
    <location>
        <begin position="278"/>
        <end position="290"/>
    </location>
</feature>
<feature type="transmembrane region" description="Beta stranded" evidence="18 34">
    <location>
        <begin position="402"/>
        <end position="415"/>
    </location>
</feature>
<feature type="domain" description="TSP type-1 1" evidence="2">
    <location>
        <begin position="22"/>
        <end position="79"/>
    </location>
</feature>
<feature type="domain" description="TSP type-1 2" evidence="2">
    <location>
        <begin position="81"/>
        <end position="134"/>
    </location>
</feature>
<feature type="domain" description="LDL-receptor class A" evidence="1">
    <location>
        <begin position="138"/>
        <end position="175"/>
    </location>
</feature>
<feature type="domain" description="MACPF" evidence="4">
    <location>
        <begin position="176"/>
        <end position="522"/>
    </location>
</feature>
<feature type="domain" description="EGF-like">
    <location>
        <begin position="523"/>
        <end position="553"/>
    </location>
</feature>
<feature type="domain" description="TSP type-1 3" evidence="2">
    <location>
        <begin position="565"/>
        <end position="612"/>
    </location>
</feature>
<feature type="domain" description="Sushi 1" evidence="3">
    <location>
        <begin position="642"/>
        <end position="701"/>
    </location>
</feature>
<feature type="domain" description="Sushi 2" evidence="3">
    <location>
        <begin position="702"/>
        <end position="763"/>
    </location>
</feature>
<feature type="domain" description="Kazal-like 1" evidence="5">
    <location>
        <begin position="780"/>
        <end position="839"/>
    </location>
</feature>
<feature type="domain" description="Kazal-like 2" evidence="5">
    <location>
        <begin position="876"/>
        <end position="934"/>
    </location>
</feature>
<feature type="region of interest" description="CCP 1">
    <location>
        <begin position="611"/>
        <end position="688"/>
    </location>
</feature>
<feature type="region of interest" description="C5b-binding domain">
    <location>
        <begin position="642"/>
        <end position="934"/>
    </location>
</feature>
<feature type="region of interest" description="CCP 2">
    <location>
        <begin position="689"/>
        <end position="765"/>
    </location>
</feature>
<feature type="region of interest" description="Factor I module (FIM) 1">
    <location>
        <begin position="766"/>
        <end position="840"/>
    </location>
</feature>
<feature type="region of interest" description="Factor I module (FIM) 2">
    <location>
        <begin position="858"/>
        <end position="934"/>
    </location>
</feature>
<feature type="binding site" evidence="11 32">
    <location>
        <position position="156"/>
    </location>
    <ligand>
        <name>Ca(2+)</name>
        <dbReference type="ChEBI" id="CHEBI:29108"/>
    </ligand>
</feature>
<feature type="binding site" evidence="11 32">
    <location>
        <position position="159"/>
    </location>
    <ligand>
        <name>Ca(2+)</name>
        <dbReference type="ChEBI" id="CHEBI:29108"/>
    </ligand>
</feature>
<feature type="binding site" evidence="11 32">
    <location>
        <position position="161"/>
    </location>
    <ligand>
        <name>Ca(2+)</name>
        <dbReference type="ChEBI" id="CHEBI:29108"/>
    </ligand>
</feature>
<feature type="binding site" evidence="11 32">
    <location>
        <position position="163"/>
    </location>
    <ligand>
        <name>Ca(2+)</name>
        <dbReference type="ChEBI" id="CHEBI:29108"/>
    </ligand>
</feature>
<feature type="binding site" evidence="11 32">
    <location>
        <position position="169"/>
    </location>
    <ligand>
        <name>Ca(2+)</name>
        <dbReference type="ChEBI" id="CHEBI:29108"/>
    </ligand>
</feature>
<feature type="binding site" evidence="11 32">
    <location>
        <position position="170"/>
    </location>
    <ligand>
        <name>Ca(2+)</name>
        <dbReference type="ChEBI" id="CHEBI:29108"/>
    </ligand>
</feature>
<feature type="glycosylation site" description="C-linked (Man) tryptophan" evidence="6">
    <location>
        <position position="29"/>
    </location>
</feature>
<feature type="glycosylation site" description="C-linked (Man) tryptophan; partial" evidence="6">
    <location>
        <position position="32"/>
    </location>
</feature>
<feature type="glycosylation site" description="O-linked (Fuc...) threonine" evidence="28">
    <location>
        <position position="38"/>
    </location>
</feature>
<feature type="glycosylation site" description="C-linked (Man) tryptophan; partial" evidence="6">
    <location>
        <position position="90"/>
    </location>
</feature>
<feature type="glycosylation site" description="N-linked (GlcNAc...) asparagine" evidence="9 10">
    <location>
        <position position="324"/>
    </location>
</feature>
<feature type="glycosylation site" description="O-linked (Fuc...) threonine" evidence="28">
    <location>
        <position position="392"/>
    </location>
</feature>
<feature type="glycosylation site" description="C-linked (Man) tryptophan; partial" evidence="6">
    <location>
        <position position="568"/>
    </location>
</feature>
<feature type="glycosylation site" description="C-linked (Man) tryptophan; partial" evidence="6">
    <location>
        <position position="571"/>
    </location>
</feature>
<feature type="glycosylation site" description="C-linked (Man) tryptophan; partial" evidence="6">
    <location>
        <position position="574"/>
    </location>
</feature>
<feature type="glycosylation site" description="N-linked (GlcNAc...) asparagine" evidence="9">
    <location>
        <position position="855"/>
    </location>
</feature>
<feature type="disulfide bond" evidence="10 11 18 30 32 34">
    <location>
        <begin position="22"/>
        <end position="61"/>
    </location>
</feature>
<feature type="disulfide bond" evidence="10 11 18 30 32 34">
    <location>
        <begin position="24"/>
        <end position="65"/>
    </location>
</feature>
<feature type="disulfide bond" evidence="10 11 18 30 32 34">
    <location>
        <begin position="35"/>
        <end position="73"/>
    </location>
</feature>
<feature type="disulfide bond" evidence="10 11 18 30 32 34">
    <location>
        <begin position="39"/>
        <end position="78"/>
    </location>
</feature>
<feature type="disulfide bond" evidence="10 11 18 30 32 34">
    <location>
        <begin position="82"/>
        <end position="117"/>
    </location>
</feature>
<feature type="disulfide bond" evidence="10 11 18 30 32 34">
    <location>
        <begin position="93"/>
        <end position="127"/>
    </location>
</feature>
<feature type="disulfide bond" evidence="10 11 18 30 32 34">
    <location>
        <begin position="96"/>
        <end position="133"/>
    </location>
</feature>
<feature type="disulfide bond" evidence="10 11 18 30 32 34">
    <location>
        <begin position="140"/>
        <end position="151"/>
    </location>
</feature>
<feature type="disulfide bond" evidence="10 11 18 30 32 34">
    <location>
        <begin position="146"/>
        <end position="164"/>
    </location>
</feature>
<feature type="disulfide bond" evidence="10 11 18 30 32 34">
    <location>
        <begin position="158"/>
        <end position="173"/>
    </location>
</feature>
<feature type="disulfide bond" evidence="10 11 18 30 32 34">
    <location>
        <begin position="180"/>
        <end position="218"/>
    </location>
</feature>
<feature type="disulfide bond" evidence="10 11 18 30 32 34">
    <location>
        <begin position="399"/>
        <end position="420"/>
    </location>
</feature>
<feature type="disulfide bond" evidence="10 11 18 30 32 34">
    <location>
        <begin position="499"/>
        <end position="623"/>
    </location>
</feature>
<feature type="disulfide bond" evidence="10 11 18 30 32 34">
    <location>
        <begin position="521"/>
        <end position="570"/>
    </location>
</feature>
<feature type="disulfide bond" evidence="10 11 18 30 32 34">
    <location>
        <begin position="523"/>
        <end position="539"/>
    </location>
</feature>
<feature type="disulfide bond" evidence="10 11 18 30 32 34">
    <location>
        <begin position="526"/>
        <end position="541"/>
    </location>
</feature>
<feature type="disulfide bond" evidence="10 11 18 30 32 34">
    <location>
        <begin position="543"/>
        <end position="552"/>
    </location>
</feature>
<feature type="disulfide bond" evidence="10 11 18 30 32 34">
    <location>
        <begin position="577"/>
        <end position="611"/>
    </location>
</feature>
<feature type="disulfide bond" evidence="10 11 18 30 32 34">
    <location>
        <begin position="589"/>
        <end position="601"/>
    </location>
</feature>
<feature type="disulfide bond" evidence="10 11 18 30 32 34">
    <location>
        <begin position="644"/>
        <end position="686"/>
    </location>
</feature>
<feature type="disulfide bond" evidence="10 11 18 30 32 34">
    <location>
        <begin position="672"/>
        <end position="699"/>
    </location>
</feature>
<feature type="disulfide bond" evidence="10 11 18 30 32 34">
    <location>
        <begin position="704"/>
        <end position="746"/>
    </location>
</feature>
<feature type="disulfide bond" evidence="10 11 18 30 32 34">
    <location>
        <begin position="732"/>
        <end position="761"/>
    </location>
</feature>
<feature type="disulfide bond" evidence="10 11 18 30 32 34">
    <location>
        <begin position="773"/>
        <end position="823"/>
    </location>
</feature>
<feature type="disulfide bond" evidence="10 11 18 30 32 34">
    <location>
        <begin position="784"/>
        <end position="801"/>
    </location>
</feature>
<feature type="disulfide bond" evidence="10 11 18 30 32 34">
    <location>
        <begin position="786"/>
        <end position="837"/>
    </location>
</feature>
<feature type="disulfide bond" evidence="10 11 18 30 32 34">
    <location>
        <begin position="793"/>
        <end position="816"/>
    </location>
</feature>
<feature type="disulfide bond" evidence="10 11 18 30 32 34">
    <location>
        <begin position="862"/>
        <end position="873"/>
    </location>
</feature>
<feature type="disulfide bond" evidence="10 11 18 30 32 34">
    <location>
        <begin position="867"/>
        <end position="919"/>
    </location>
</feature>
<feature type="disulfide bond" evidence="10 11 18 30 32 34">
    <location>
        <begin position="880"/>
        <end position="897"/>
    </location>
</feature>
<feature type="disulfide bond" evidence="10 11 18 30 32 34">
    <location>
        <begin position="882"/>
        <end position="932"/>
    </location>
</feature>
<feature type="disulfide bond" evidence="10 11 18 30 32 34">
    <location>
        <begin position="888"/>
        <end position="912"/>
    </location>
</feature>
<feature type="sequence variant" id="VAR_006056" description="In allotype C6 A; dbSNP:rs1801033." evidence="7 13 16 23 24">
    <original>A</original>
    <variation>E</variation>
    <location>
        <position position="119"/>
    </location>
</feature>
<feature type="sequence variant" id="VAR_027647" description="In dbSNP:rs6896011.">
    <original>K</original>
    <variation>E</variation>
    <location>
        <position position="397"/>
    </location>
</feature>
<feature type="sequence variant" id="VAR_027648" description="In dbSNP:rs10462014.">
    <original>S</original>
    <variation>F</variation>
    <location>
        <position position="470"/>
    </location>
</feature>
<feature type="sequence conflict" description="In Ref. 4; BAD02321." evidence="27" ref="4">
    <original>Q</original>
    <variation>H</variation>
    <location>
        <position position="567"/>
    </location>
</feature>
<feature type="sequence conflict" description="In Ref. 4; BAD02321." evidence="27" ref="4">
    <original>M</original>
    <variation>I</variation>
    <location>
        <position position="616"/>
    </location>
</feature>
<feature type="sequence conflict" description="In Ref. 4; BAD02321." evidence="27" ref="4">
    <original>A</original>
    <variation>T</variation>
    <location>
        <position position="934"/>
    </location>
</feature>
<feature type="helix" evidence="40">
    <location>
        <begin position="24"/>
        <end position="26"/>
    </location>
</feature>
<feature type="strand" evidence="40">
    <location>
        <begin position="38"/>
        <end position="40"/>
    </location>
</feature>
<feature type="strand" evidence="40">
    <location>
        <begin position="42"/>
        <end position="48"/>
    </location>
</feature>
<feature type="helix" evidence="40">
    <location>
        <begin position="54"/>
        <end position="58"/>
    </location>
</feature>
<feature type="helix" evidence="40">
    <location>
        <begin position="61"/>
        <end position="64"/>
    </location>
</feature>
<feature type="strand" evidence="40">
    <location>
        <begin position="68"/>
        <end position="73"/>
    </location>
</feature>
<feature type="strand" evidence="40">
    <location>
        <begin position="95"/>
        <end position="97"/>
    </location>
</feature>
<feature type="strand" evidence="42">
    <location>
        <begin position="99"/>
        <end position="103"/>
    </location>
</feature>
<feature type="strand" evidence="40">
    <location>
        <begin position="106"/>
        <end position="108"/>
    </location>
</feature>
<feature type="strand" evidence="42">
    <location>
        <begin position="121"/>
        <end position="126"/>
    </location>
</feature>
<feature type="strand" evidence="40">
    <location>
        <begin position="130"/>
        <end position="133"/>
    </location>
</feature>
<feature type="strand" evidence="40">
    <location>
        <begin position="141"/>
        <end position="145"/>
    </location>
</feature>
<feature type="strand" evidence="40">
    <location>
        <begin position="151"/>
        <end position="153"/>
    </location>
</feature>
<feature type="helix" evidence="40">
    <location>
        <begin position="154"/>
        <end position="156"/>
    </location>
</feature>
<feature type="strand" evidence="40">
    <location>
        <begin position="157"/>
        <end position="161"/>
    </location>
</feature>
<feature type="strand" evidence="40">
    <location>
        <begin position="164"/>
        <end position="167"/>
    </location>
</feature>
<feature type="helix" evidence="40">
    <location>
        <begin position="168"/>
        <end position="170"/>
    </location>
</feature>
<feature type="strand" evidence="40">
    <location>
        <begin position="179"/>
        <end position="182"/>
    </location>
</feature>
<feature type="helix" evidence="40">
    <location>
        <begin position="190"/>
        <end position="194"/>
    </location>
</feature>
<feature type="strand" evidence="40">
    <location>
        <begin position="195"/>
        <end position="198"/>
    </location>
</feature>
<feature type="turn" evidence="40">
    <location>
        <begin position="199"/>
        <end position="202"/>
    </location>
</feature>
<feature type="strand" evidence="40">
    <location>
        <begin position="203"/>
        <end position="207"/>
    </location>
</feature>
<feature type="strand" evidence="40">
    <location>
        <begin position="226"/>
        <end position="228"/>
    </location>
</feature>
<feature type="strand" evidence="40">
    <location>
        <begin position="236"/>
        <end position="240"/>
    </location>
</feature>
<feature type="helix" evidence="40">
    <location>
        <begin position="247"/>
        <end position="249"/>
    </location>
</feature>
<feature type="strand" evidence="40">
    <location>
        <begin position="250"/>
        <end position="256"/>
    </location>
</feature>
<feature type="helix" evidence="40">
    <location>
        <begin position="258"/>
        <end position="262"/>
    </location>
</feature>
<feature type="strand" evidence="41">
    <location>
        <begin position="279"/>
        <end position="282"/>
    </location>
</feature>
<feature type="turn" evidence="40">
    <location>
        <begin position="287"/>
        <end position="289"/>
    </location>
</feature>
<feature type="helix" evidence="40">
    <location>
        <begin position="298"/>
        <end position="307"/>
    </location>
</feature>
<feature type="strand" evidence="40">
    <location>
        <begin position="309"/>
        <end position="327"/>
    </location>
</feature>
<feature type="strand" evidence="40">
    <location>
        <begin position="329"/>
        <end position="331"/>
    </location>
</feature>
<feature type="helix" evidence="40">
    <location>
        <begin position="336"/>
        <end position="341"/>
    </location>
</feature>
<feature type="helix" evidence="40">
    <location>
        <begin position="351"/>
        <end position="361"/>
    </location>
</feature>
<feature type="strand" evidence="40">
    <location>
        <begin position="363"/>
        <end position="365"/>
    </location>
</feature>
<feature type="strand" evidence="40">
    <location>
        <begin position="367"/>
        <end position="382"/>
    </location>
</feature>
<feature type="helix" evidence="40">
    <location>
        <begin position="383"/>
        <end position="389"/>
    </location>
</feature>
<feature type="helix" evidence="40">
    <location>
        <begin position="393"/>
        <end position="407"/>
    </location>
</feature>
<feature type="helix" evidence="40">
    <location>
        <begin position="418"/>
        <end position="420"/>
    </location>
</feature>
<feature type="helix" evidence="40">
    <location>
        <begin position="426"/>
        <end position="429"/>
    </location>
</feature>
<feature type="helix" evidence="40">
    <location>
        <begin position="434"/>
        <end position="436"/>
    </location>
</feature>
<feature type="strand" evidence="40">
    <location>
        <begin position="437"/>
        <end position="442"/>
    </location>
</feature>
<feature type="strand" evidence="40">
    <location>
        <begin position="445"/>
        <end position="447"/>
    </location>
</feature>
<feature type="helix" evidence="40">
    <location>
        <begin position="449"/>
        <end position="455"/>
    </location>
</feature>
<feature type="strand" evidence="40">
    <location>
        <begin position="461"/>
        <end position="465"/>
    </location>
</feature>
<feature type="helix" evidence="40">
    <location>
        <begin position="466"/>
        <end position="478"/>
    </location>
</feature>
<feature type="strand" evidence="40">
    <location>
        <begin position="481"/>
        <end position="486"/>
    </location>
</feature>
<feature type="strand" evidence="41">
    <location>
        <begin position="487"/>
        <end position="489"/>
    </location>
</feature>
<feature type="helix" evidence="40">
    <location>
        <begin position="490"/>
        <end position="493"/>
    </location>
</feature>
<feature type="helix" evidence="40">
    <location>
        <begin position="500"/>
        <end position="516"/>
    </location>
</feature>
<feature type="helix" evidence="40">
    <location>
        <begin position="520"/>
        <end position="522"/>
    </location>
</feature>
<feature type="turn" evidence="40">
    <location>
        <begin position="527"/>
        <end position="529"/>
    </location>
</feature>
<feature type="strand" evidence="40">
    <location>
        <begin position="530"/>
        <end position="535"/>
    </location>
</feature>
<feature type="strand" evidence="40">
    <location>
        <begin position="538"/>
        <end position="542"/>
    </location>
</feature>
<feature type="strand" evidence="42">
    <location>
        <begin position="547"/>
        <end position="549"/>
    </location>
</feature>
<feature type="helix" evidence="41">
    <location>
        <begin position="550"/>
        <end position="552"/>
    </location>
</feature>
<feature type="strand" evidence="40">
    <location>
        <begin position="579"/>
        <end position="586"/>
    </location>
</feature>
<feature type="strand" evidence="40">
    <location>
        <begin position="595"/>
        <end position="597"/>
    </location>
</feature>
<feature type="strand" evidence="40">
    <location>
        <begin position="605"/>
        <end position="610"/>
    </location>
</feature>
<feature type="helix" evidence="42">
    <location>
        <begin position="628"/>
        <end position="630"/>
    </location>
</feature>
<feature type="strand" evidence="42">
    <location>
        <begin position="631"/>
        <end position="633"/>
    </location>
</feature>
<feature type="strand" evidence="41">
    <location>
        <begin position="643"/>
        <end position="645"/>
    </location>
</feature>
<feature type="strand" evidence="40">
    <location>
        <begin position="653"/>
        <end position="656"/>
    </location>
</feature>
<feature type="strand" evidence="42">
    <location>
        <begin position="660"/>
        <end position="662"/>
    </location>
</feature>
<feature type="strand" evidence="40">
    <location>
        <begin position="667"/>
        <end position="672"/>
    </location>
</feature>
<feature type="strand" evidence="40">
    <location>
        <begin position="676"/>
        <end position="680"/>
    </location>
</feature>
<feature type="strand" evidence="40">
    <location>
        <begin position="683"/>
        <end position="686"/>
    </location>
</feature>
<feature type="strand" evidence="41">
    <location>
        <begin position="688"/>
        <end position="692"/>
    </location>
</feature>
<feature type="strand" evidence="40">
    <location>
        <begin position="698"/>
        <end position="701"/>
    </location>
</feature>
<feature type="strand" evidence="40">
    <location>
        <begin position="703"/>
        <end position="705"/>
    </location>
</feature>
<feature type="strand" evidence="40">
    <location>
        <begin position="711"/>
        <end position="714"/>
    </location>
</feature>
<feature type="strand" evidence="41">
    <location>
        <begin position="715"/>
        <end position="717"/>
    </location>
</feature>
<feature type="strand" evidence="40">
    <location>
        <begin position="720"/>
        <end position="723"/>
    </location>
</feature>
<feature type="strand" evidence="40">
    <location>
        <begin position="727"/>
        <end position="729"/>
    </location>
</feature>
<feature type="strand" evidence="42">
    <location>
        <begin position="733"/>
        <end position="735"/>
    </location>
</feature>
<feature type="strand" evidence="40">
    <location>
        <begin position="737"/>
        <end position="740"/>
    </location>
</feature>
<feature type="strand" evidence="40">
    <location>
        <begin position="742"/>
        <end position="745"/>
    </location>
</feature>
<feature type="strand" evidence="41">
    <location>
        <begin position="747"/>
        <end position="749"/>
    </location>
</feature>
<feature type="strand" evidence="41">
    <location>
        <begin position="755"/>
        <end position="757"/>
    </location>
</feature>
<feature type="turn" evidence="40">
    <location>
        <begin position="772"/>
        <end position="776"/>
    </location>
</feature>
<feature type="strand" evidence="43">
    <location>
        <begin position="777"/>
        <end position="780"/>
    </location>
</feature>
<feature type="strand" evidence="43">
    <location>
        <begin position="783"/>
        <end position="786"/>
    </location>
</feature>
<feature type="turn" evidence="43">
    <location>
        <begin position="789"/>
        <end position="791"/>
    </location>
</feature>
<feature type="strand" evidence="43">
    <location>
        <begin position="799"/>
        <end position="804"/>
    </location>
</feature>
<feature type="turn" evidence="43">
    <location>
        <begin position="805"/>
        <end position="808"/>
    </location>
</feature>
<feature type="strand" evidence="43">
    <location>
        <begin position="809"/>
        <end position="814"/>
    </location>
</feature>
<feature type="helix" evidence="43">
    <location>
        <begin position="815"/>
        <end position="823"/>
    </location>
</feature>
<feature type="helix" evidence="40">
    <location>
        <begin position="825"/>
        <end position="827"/>
    </location>
</feature>
<feature type="strand" evidence="43">
    <location>
        <begin position="829"/>
        <end position="836"/>
    </location>
</feature>
<feature type="helix" evidence="43">
    <location>
        <begin position="841"/>
        <end position="852"/>
    </location>
</feature>
<feature type="helix" evidence="43">
    <location>
        <begin position="853"/>
        <end position="855"/>
    </location>
</feature>
<feature type="strand" evidence="43">
    <location>
        <begin position="860"/>
        <end position="862"/>
    </location>
</feature>
<feature type="strand" evidence="43">
    <location>
        <begin position="865"/>
        <end position="867"/>
    </location>
</feature>
<feature type="strand" evidence="43">
    <location>
        <begin position="871"/>
        <end position="873"/>
    </location>
</feature>
<feature type="turn" evidence="43">
    <location>
        <begin position="875"/>
        <end position="877"/>
    </location>
</feature>
<feature type="strand" evidence="43">
    <location>
        <begin position="880"/>
        <end position="882"/>
    </location>
</feature>
<feature type="helix" evidence="43">
    <location>
        <begin position="885"/>
        <end position="887"/>
    </location>
</feature>
<feature type="strand" evidence="43">
    <location>
        <begin position="895"/>
        <end position="902"/>
    </location>
</feature>
<feature type="strand" evidence="43">
    <location>
        <begin position="907"/>
        <end position="910"/>
    </location>
</feature>
<feature type="helix" evidence="43">
    <location>
        <begin position="911"/>
        <end position="919"/>
    </location>
</feature>
<feature type="strand" evidence="43">
    <location>
        <begin position="924"/>
        <end position="931"/>
    </location>
</feature>
<reference key="1">
    <citation type="journal article" date="1989" name="J. Biol. Chem.">
        <title>Complete primary structure and functional characterization of the sixth component of the human complement system. Identification of the C5b-binding domain in complement C6.</title>
        <authorList>
            <person name="Haefliger J.-A."/>
            <person name="Tschopp J."/>
            <person name="Vial N."/>
            <person name="Jenne D.E."/>
        </authorList>
    </citation>
    <scope>NUCLEOTIDE SEQUENCE [MRNA]</scope>
    <scope>PROTEIN SEQUENCE OF 22-31 AND 633-640</scope>
    <scope>SUBCELLULAR LOCATION</scope>
</reference>
<reference key="2">
    <citation type="journal article" date="1989" name="J. Biol. Chem.">
        <title>The molecular architecture of human complement component C6.</title>
        <authorList>
            <person name="Discipio R.G."/>
            <person name="Hugli T.E."/>
        </authorList>
    </citation>
    <scope>NUCLEOTIDE SEQUENCE [MRNA]</scope>
    <scope>VARIANT GLU-119</scope>
</reference>
<reference key="3">
    <citation type="journal article" date="1993" name="Biochemistry">
        <title>Structure of the human C6 gene.</title>
        <authorList>
            <person name="Hobart M.J."/>
            <person name="Fernie B."/>
            <person name="Discipio R.G."/>
        </authorList>
    </citation>
    <scope>NUCLEOTIDE SEQUENCE [GENOMIC DNA]</scope>
    <scope>VARIANT GLU-119</scope>
    <source>
        <tissue>Blood</tissue>
    </source>
</reference>
<reference key="4">
    <citation type="submission" date="2003-11" db="EMBL/GenBank/DDBJ databases">
        <title>Sequence variation in C6 locus.</title>
        <authorList>
            <person name="Soejima M."/>
            <person name="Koda Y."/>
        </authorList>
    </citation>
    <scope>NUCLEOTIDE SEQUENCE [MRNA]</scope>
</reference>
<reference key="5">
    <citation type="journal article" date="2004" name="Nature">
        <title>The DNA sequence and comparative analysis of human chromosome 5.</title>
        <authorList>
            <person name="Schmutz J."/>
            <person name="Martin J."/>
            <person name="Terry A."/>
            <person name="Couronne O."/>
            <person name="Grimwood J."/>
            <person name="Lowry S."/>
            <person name="Gordon L.A."/>
            <person name="Scott D."/>
            <person name="Xie G."/>
            <person name="Huang W."/>
            <person name="Hellsten U."/>
            <person name="Tran-Gyamfi M."/>
            <person name="She X."/>
            <person name="Prabhakar S."/>
            <person name="Aerts A."/>
            <person name="Altherr M."/>
            <person name="Bajorek E."/>
            <person name="Black S."/>
            <person name="Branscomb E."/>
            <person name="Caoile C."/>
            <person name="Challacombe J.F."/>
            <person name="Chan Y.M."/>
            <person name="Denys M."/>
            <person name="Detter J.C."/>
            <person name="Escobar J."/>
            <person name="Flowers D."/>
            <person name="Fotopulos D."/>
            <person name="Glavina T."/>
            <person name="Gomez M."/>
            <person name="Gonzales E."/>
            <person name="Goodstein D."/>
            <person name="Grigoriev I."/>
            <person name="Groza M."/>
            <person name="Hammon N."/>
            <person name="Hawkins T."/>
            <person name="Haydu L."/>
            <person name="Israni S."/>
            <person name="Jett J."/>
            <person name="Kadner K."/>
            <person name="Kimball H."/>
            <person name="Kobayashi A."/>
            <person name="Lopez F."/>
            <person name="Lou Y."/>
            <person name="Martinez D."/>
            <person name="Medina C."/>
            <person name="Morgan J."/>
            <person name="Nandkeshwar R."/>
            <person name="Noonan J.P."/>
            <person name="Pitluck S."/>
            <person name="Pollard M."/>
            <person name="Predki P."/>
            <person name="Priest J."/>
            <person name="Ramirez L."/>
            <person name="Retterer J."/>
            <person name="Rodriguez A."/>
            <person name="Rogers S."/>
            <person name="Salamov A."/>
            <person name="Salazar A."/>
            <person name="Thayer N."/>
            <person name="Tice H."/>
            <person name="Tsai M."/>
            <person name="Ustaszewska A."/>
            <person name="Vo N."/>
            <person name="Wheeler J."/>
            <person name="Wu K."/>
            <person name="Yang J."/>
            <person name="Dickson M."/>
            <person name="Cheng J.-F."/>
            <person name="Eichler E.E."/>
            <person name="Olsen A."/>
            <person name="Pennacchio L.A."/>
            <person name="Rokhsar D.S."/>
            <person name="Richardson P."/>
            <person name="Lucas S.M."/>
            <person name="Myers R.M."/>
            <person name="Rubin E.M."/>
        </authorList>
    </citation>
    <scope>NUCLEOTIDE SEQUENCE [LARGE SCALE GENOMIC DNA]</scope>
</reference>
<reference key="6">
    <citation type="journal article" date="2004" name="Genome Res.">
        <title>The status, quality, and expansion of the NIH full-length cDNA project: the Mammalian Gene Collection (MGC).</title>
        <authorList>
            <consortium name="The MGC Project Team"/>
        </authorList>
    </citation>
    <scope>NUCLEOTIDE SEQUENCE [LARGE SCALE MRNA]</scope>
    <scope>VARIANT GLU-119</scope>
    <source>
        <tissue>Ovary</tissue>
    </source>
</reference>
<reference key="7">
    <citation type="journal article" date="1989" name="Proc. Natl. Acad. Sci. U.S.A.">
        <title>Structural homology of complement protein C6 with other channel-forming proteins of complement.</title>
        <authorList>
            <person name="Chakravarti D.N."/>
            <person name="Chakravarti B."/>
            <person name="Parra C.A."/>
            <person name="Mueller-Eberhard H.J."/>
        </authorList>
    </citation>
    <scope>NUCLEOTIDE SEQUENCE [MRNA] OF 1-491</scope>
    <scope>VARIANT GLU-119</scope>
</reference>
<reference key="8">
    <citation type="journal article" date="1997" name="Biochim. Biophys. Acta">
        <title>Elucidation of the disulfide-bonding pattern in the factor I modules of the sixth component (C6) of human complement.</title>
        <authorList>
            <person name="Lengweiler S."/>
            <person name="Schaller J."/>
            <person name="DiScipio R.G."/>
            <person name="Rickli E.E."/>
        </authorList>
    </citation>
    <scope>DISULFIDE BONDS IN FACTOR I MODULE 1 REGION</scope>
</reference>
<reference key="9">
    <citation type="journal article" date="1999" name="J. Biol. Chem.">
        <title>The four terminal components of the complement system are C-mannosylated on multiple tryptophan residues.</title>
        <authorList>
            <person name="Hofsteenge J."/>
            <person name="Blommers M."/>
            <person name="Hess D."/>
            <person name="Furmanek A."/>
            <person name="Miroshnichenko O."/>
        </authorList>
    </citation>
    <scope>GLYCOSYLATION AT TRP-29; TRP-32; TRP-90; TRP-568; TRP-571 AND TRP-574</scope>
</reference>
<reference key="10">
    <citation type="journal article" date="2005" name="J. Proteome Res.">
        <title>Human plasma N-glycoproteome analysis by immunoaffinity subtraction, hydrazide chemistry, and mass spectrometry.</title>
        <authorList>
            <person name="Liu T."/>
            <person name="Qian W.-J."/>
            <person name="Gritsenko M.A."/>
            <person name="Camp D.G. II"/>
            <person name="Monroe M.E."/>
            <person name="Moore R.J."/>
            <person name="Smith R.D."/>
        </authorList>
    </citation>
    <scope>GLYCOSYLATION [LARGE SCALE ANALYSIS] AT ASN-324 AND ASN-855</scope>
    <source>
        <tissue>Plasma</tissue>
    </source>
</reference>
<reference evidence="31" key="11">
    <citation type="journal article" date="2012" name="Cell Rep.">
        <title>Assembly and regulation of the membrane attack complex based on structures of C5b6 and sC5b9.</title>
        <authorList>
            <person name="Hadders M.A."/>
            <person name="Bubeck D."/>
            <person name="Roversi P."/>
            <person name="Hakobyan S."/>
            <person name="Forneris F."/>
            <person name="Morgan B.P."/>
            <person name="Pangburn M.K."/>
            <person name="Llorca O."/>
            <person name="Lea S.M."/>
            <person name="Gros P."/>
        </authorList>
    </citation>
    <scope>X-RAY CRYSTALLOGRAPHY (3.50 ANGSTROMS) OF 22-934 IN COMPLEX WITH COMPLEMENT C5B AND CA(2+)</scope>
    <scope>FUNCTION</scope>
    <scope>SUBUNIT</scope>
</reference>
<reference key="12">
    <citation type="journal article" date="2014" name="J. Proteomics">
        <title>An enzyme assisted RP-RPLC approach for in-depth analysis of human liver phosphoproteome.</title>
        <authorList>
            <person name="Bian Y."/>
            <person name="Song C."/>
            <person name="Cheng K."/>
            <person name="Dong M."/>
            <person name="Wang F."/>
            <person name="Huang J."/>
            <person name="Sun D."/>
            <person name="Wang L."/>
            <person name="Ye M."/>
            <person name="Zou H."/>
        </authorList>
    </citation>
    <scope>IDENTIFICATION BY MASS SPECTROMETRY [LARGE SCALE ANALYSIS]</scope>
    <source>
        <tissue>Liver</tissue>
    </source>
</reference>
<reference key="13">
    <citation type="journal article" date="2016" name="Cell Rep.">
        <title>Heterogeneous MAC initiator and pore structures in a lipid bilayer by phase-plate cryo-electron tomography.</title>
        <authorList>
            <person name="Sharp T.H."/>
            <person name="Koster A.J."/>
            <person name="Gros P."/>
        </authorList>
    </citation>
    <scope>FUNCTION</scope>
    <scope>SUBUNIT</scope>
</reference>
<reference key="14">
    <citation type="journal article" date="2016" name="Nat. Commun.">
        <title>Structural basis of complement membrane attack complex formation.</title>
        <authorList>
            <person name="Serna M."/>
            <person name="Giles J.L."/>
            <person name="Morgan B.P."/>
            <person name="Bubeck D."/>
        </authorList>
    </citation>
    <scope>FUNCTION</scope>
    <scope>SUBUNIT</scope>
</reference>
<reference key="15">
    <citation type="journal article" date="2019" name="Nat. Commun.">
        <title>Single-molecule kinetics of pore assembly by the membrane attack complex.</title>
        <authorList>
            <person name="Parsons E.S."/>
            <person name="Stanley G.J."/>
            <person name="Pyne A.L.B."/>
            <person name="Hodel A.W."/>
            <person name="Nievergelt A.P."/>
            <person name="Menny A."/>
            <person name="Yon A.R."/>
            <person name="Rowley A."/>
            <person name="Richter R.P."/>
            <person name="Fantner G.E."/>
            <person name="Bubeck D."/>
            <person name="Hoogenboom B.W."/>
        </authorList>
    </citation>
    <scope>FUNCTION</scope>
    <scope>SUBUNIT</scope>
</reference>
<reference key="16">
    <citation type="journal article" date="2020" name="PLoS Pathog.">
        <title>Bacterial killing by complement requires direct anchoring of membrane attack complex precursor C5b-7.</title>
        <authorList>
            <person name="Doorduijn D.J."/>
            <person name="Bardoel B.W."/>
            <person name="Heesterbeek D.A.C."/>
            <person name="Ruyken M."/>
            <person name="Benn G."/>
            <person name="Parsons E.S."/>
            <person name="Hoogenboom B.W."/>
            <person name="Rooijakkers S.H.M."/>
        </authorList>
    </citation>
    <scope>FUNCTION</scope>
    <scope>SUBUNIT</scope>
    <scope>SUBCELLULAR LOCATION</scope>
</reference>
<reference evidence="30" key="17">
    <citation type="journal article" date="2012" name="J. Biol. Chem.">
        <title>Structure of complement C6 suggests a mechanism for initiation and unidirectional, sequential assembly of membrane attack complex (MAC).</title>
        <authorList>
            <person name="Aleshin A.E."/>
            <person name="Schraufstatter I.U."/>
            <person name="Stec B."/>
            <person name="Bankston L.A."/>
            <person name="Liddington R.C."/>
            <person name="DiScipio R.G."/>
        </authorList>
    </citation>
    <scope>X-RAY CRYSTALLOGRAPHY (2.87 ANGSTROMS) OF 22-934</scope>
    <scope>GLYCOSYLATION AT TRP-29; TRP-32; THR-38; ASN-324; THR-392; TRP-568 AND TRP-571</scope>
    <scope>FUNCTION</scope>
    <scope>SUBUNIT</scope>
    <scope>DISULFIDE BONDS</scope>
</reference>
<reference evidence="32" key="18">
    <citation type="journal article" date="2012" name="J. Biol. Chem.">
        <title>Crystal structure of C5b-6 suggests structural basis for priming assembly of the membrane attack complex.</title>
        <authorList>
            <person name="Aleshin A.E."/>
            <person name="DiScipio R.G."/>
            <person name="Stec B."/>
            <person name="Liddington R.C."/>
        </authorList>
    </citation>
    <scope>X-RAY CRYSTALLOGRAPHY (4.21 ANGSTROMS) OF 22-934 IN COMPLEX WITH COMPLEMENT C5B AND CALCIUM</scope>
    <scope>INTERACTION WITH COMPLEMENT C5B</scope>
    <scope>DISULFIDE BONDS</scope>
</reference>
<reference evidence="33 34" key="19">
    <citation type="journal article" date="2018" name="Nat. Commun.">
        <title>CryoEM reveals how the complement membrane attack complex ruptures lipid bilayers.</title>
        <authorList>
            <person name="Menny A."/>
            <person name="Serna M."/>
            <person name="Boyd C.M."/>
            <person name="Gardner S."/>
            <person name="Joseph A.P."/>
            <person name="Morgan B.P."/>
            <person name="Topf M."/>
            <person name="Brooks N.J."/>
            <person name="Bubeck D."/>
        </authorList>
    </citation>
    <scope>STRUCTURE BY ELECTRON MICROSCOPY (5.60 ANGSTROMS) OF 22-934 OF MEMBRANE ATTACK COMPLEX</scope>
    <scope>FUNCTION</scope>
    <scope>SUBUNIT</scope>
    <scope>SUBCELLULAR LOCATION</scope>
    <scope>DISULFIDE BONDS</scope>
</reference>
<reference evidence="35 36" key="20">
    <citation type="journal article" date="2021" name="Nat. Commun.">
        <title>Structural basis of soluble membrane attack complex packaging for clearance.</title>
        <authorList>
            <person name="Menny A."/>
            <person name="Lukassen M.V."/>
            <person name="Couves E.C."/>
            <person name="Franc V."/>
            <person name="Heck A.J.R."/>
            <person name="Bubeck D."/>
        </authorList>
    </citation>
    <scope>STRUCTURE BY ELECTRON MICROSCOPY (3.27 ANGSTROMS) OF 22-934 OF MEMBRANE ATTACK COMPLEX</scope>
    <scope>ACTIVITY REGULATION</scope>
</reference>
<reference evidence="37 38 39" key="21">
    <citation type="journal article" date="2023" name="Nat. Commun.">
        <title>Structural basis for membrane attack complex inhibition by CD59.</title>
        <authorList>
            <person name="Couves E.C."/>
            <person name="Gardner S."/>
            <person name="Voisin T.B."/>
            <person name="Bickel J.K."/>
            <person name="Stansfeld P.J."/>
            <person name="Tate E.W."/>
            <person name="Bubeck D."/>
        </authorList>
    </citation>
    <scope>STRUCTURE BY ELECTRON MICROSCOPY (3.00 ANGSTROMS) IN COMPLEX WITH THE MEMBRANE ATTACK COMPLEX</scope>
    <scope>ACTIVITY REGULATION</scope>
</reference>
<reference key="22">
    <citation type="journal article" date="1993" name="Biochem. Biophys. Res. Commun.">
        <title>Polymorphism of human complement component C6: an amino acid substitution (Glu/Ala) within the second thrombospondin repeat differentiates between the two common allotypes C6 A and C6 B.</title>
        <authorList>
            <person name="Dewald G."/>
            <person name="Nothen M.M."/>
            <person name="Cichon S."/>
        </authorList>
    </citation>
    <scope>VARIANT ALLOTYPE C6 A GLU-119</scope>
</reference>
<reference key="23">
    <citation type="journal article" date="2005" name="Eur. J. Pediatr.">
        <title>Meningococccal meningitis and complement component 6 deficiency associated with oculocutaneous albinism.</title>
        <authorList>
            <person name="Ikinciogullari A."/>
            <person name="Tekin M."/>
            <person name="Dogu F."/>
            <person name="Reisli I."/>
            <person name="Tanir G."/>
            <person name="Yi Z."/>
            <person name="Garrison N."/>
            <person name="Brilliant M.H."/>
            <person name="Babacan E."/>
        </authorList>
    </citation>
    <scope>INVOLVEMENT IN COMPLEMENT COMPONENT 6 DEFICIENCY</scope>
</reference>
<dbReference type="EMBL" id="J05064">
    <property type="protein sequence ID" value="AAA51860.1"/>
    <property type="molecule type" value="mRNA"/>
</dbReference>
<dbReference type="EMBL" id="J05024">
    <property type="protein sequence ID" value="AAA59668.1"/>
    <property type="molecule type" value="mRNA"/>
</dbReference>
<dbReference type="EMBL" id="X72177">
    <property type="protein sequence ID" value="CAA50994.1"/>
    <property type="molecule type" value="Genomic_DNA"/>
</dbReference>
<dbReference type="EMBL" id="AB126592">
    <property type="protein sequence ID" value="BAD02321.1"/>
    <property type="molecule type" value="mRNA"/>
</dbReference>
<dbReference type="EMBL" id="AC008863">
    <property type="status" value="NOT_ANNOTATED_CDS"/>
    <property type="molecule type" value="Genomic_DNA"/>
</dbReference>
<dbReference type="EMBL" id="AC091871">
    <property type="status" value="NOT_ANNOTATED_CDS"/>
    <property type="molecule type" value="Genomic_DNA"/>
</dbReference>
<dbReference type="EMBL" id="BC035723">
    <property type="protein sequence ID" value="AAH35723.1"/>
    <property type="molecule type" value="mRNA"/>
</dbReference>
<dbReference type="EMBL" id="J04506">
    <property type="protein sequence ID" value="AAB59433.1"/>
    <property type="molecule type" value="mRNA"/>
</dbReference>
<dbReference type="CCDS" id="CCDS3936.1"/>
<dbReference type="PIR" id="A34372">
    <property type="entry name" value="A34372"/>
</dbReference>
<dbReference type="RefSeq" id="NP_000056.2">
    <property type="nucleotide sequence ID" value="NM_000065.5"/>
</dbReference>
<dbReference type="RefSeq" id="NP_001108603.2">
    <property type="nucleotide sequence ID" value="NM_001115131.4"/>
</dbReference>
<dbReference type="PDB" id="3T5O">
    <property type="method" value="X-ray"/>
    <property type="resolution" value="2.87 A"/>
    <property type="chains" value="A=22-934"/>
</dbReference>
<dbReference type="PDB" id="4A5W">
    <property type="method" value="X-ray"/>
    <property type="resolution" value="3.50 A"/>
    <property type="chains" value="B=22-934"/>
</dbReference>
<dbReference type="PDB" id="4E0S">
    <property type="method" value="X-ray"/>
    <property type="resolution" value="4.21 A"/>
    <property type="chains" value="B=22-934"/>
</dbReference>
<dbReference type="PDB" id="6H03">
    <property type="method" value="EM"/>
    <property type="resolution" value="5.60 A"/>
    <property type="chains" value="B=22-934"/>
</dbReference>
<dbReference type="PDB" id="6H04">
    <property type="method" value="EM"/>
    <property type="resolution" value="5.60 A"/>
    <property type="chains" value="B=22-934"/>
</dbReference>
<dbReference type="PDB" id="7NYC">
    <property type="method" value="EM"/>
    <property type="resolution" value="3.50 A"/>
    <property type="chains" value="B=22-934"/>
</dbReference>
<dbReference type="PDB" id="7NYD">
    <property type="method" value="EM"/>
    <property type="resolution" value="3.30 A"/>
    <property type="chains" value="B=22-934"/>
</dbReference>
<dbReference type="PDB" id="7Q6C">
    <property type="method" value="X-ray"/>
    <property type="resolution" value="2.29 A"/>
    <property type="chains" value="A=769-934"/>
</dbReference>
<dbReference type="PDB" id="8B0F">
    <property type="method" value="EM"/>
    <property type="resolution" value="3.00 A"/>
    <property type="chains" value="B=1-934"/>
</dbReference>
<dbReference type="PDB" id="8B0G">
    <property type="method" value="EM"/>
    <property type="resolution" value="3.30 A"/>
    <property type="chains" value="B=1-934"/>
</dbReference>
<dbReference type="PDB" id="8B0H">
    <property type="method" value="EM"/>
    <property type="resolution" value="3.30 A"/>
    <property type="chains" value="B=1-934"/>
</dbReference>
<dbReference type="PDBsum" id="3T5O"/>
<dbReference type="PDBsum" id="4A5W"/>
<dbReference type="PDBsum" id="4E0S"/>
<dbReference type="PDBsum" id="6H03"/>
<dbReference type="PDBsum" id="6H04"/>
<dbReference type="PDBsum" id="7NYC"/>
<dbReference type="PDBsum" id="7NYD"/>
<dbReference type="PDBsum" id="7Q6C"/>
<dbReference type="PDBsum" id="8B0F"/>
<dbReference type="PDBsum" id="8B0G"/>
<dbReference type="PDBsum" id="8B0H"/>
<dbReference type="EMDB" id="EMD-0106"/>
<dbReference type="EMDB" id="EMD-0107"/>
<dbReference type="EMDB" id="EMD-12649"/>
<dbReference type="EMDB" id="EMD-12650"/>
<dbReference type="EMDB" id="EMD-12651"/>
<dbReference type="EMDB" id="EMD-15779"/>
<dbReference type="EMDB" id="EMD-15780"/>
<dbReference type="EMDB" id="EMD-15781"/>
<dbReference type="SMR" id="P13671"/>
<dbReference type="BioGRID" id="107190">
    <property type="interactions" value="16"/>
</dbReference>
<dbReference type="ComplexPortal" id="CPX-6159">
    <property type="entry name" value="Membrane attack complex"/>
</dbReference>
<dbReference type="ComplexPortal" id="CPX-677">
    <property type="entry name" value="C5b6 complement complex"/>
</dbReference>
<dbReference type="FunCoup" id="P13671">
    <property type="interactions" value="106"/>
</dbReference>
<dbReference type="IntAct" id="P13671">
    <property type="interactions" value="12"/>
</dbReference>
<dbReference type="STRING" id="9606.ENSP00000263413"/>
<dbReference type="TCDB" id="1.C.39.3.3">
    <property type="family name" value="the membrane attack complex/perforin (macpf) family"/>
</dbReference>
<dbReference type="CarbonylDB" id="P13671"/>
<dbReference type="GlyConnect" id="791">
    <property type="glycosylation" value="7 N-Linked glycans (4 sites)"/>
</dbReference>
<dbReference type="GlyCosmos" id="P13671">
    <property type="glycosylation" value="12 sites, 7 glycans"/>
</dbReference>
<dbReference type="GlyGen" id="P13671">
    <property type="glycosylation" value="14 sites, 26 N-linked glycans (4 sites), 1 O-linked glycan (1 site)"/>
</dbReference>
<dbReference type="iPTMnet" id="P13671"/>
<dbReference type="PhosphoSitePlus" id="P13671"/>
<dbReference type="BioMuta" id="C6"/>
<dbReference type="DMDM" id="146345396"/>
<dbReference type="jPOST" id="P13671"/>
<dbReference type="MassIVE" id="P13671"/>
<dbReference type="PaxDb" id="9606-ENSP00000263413"/>
<dbReference type="PeptideAtlas" id="P13671"/>
<dbReference type="ProteomicsDB" id="52956"/>
<dbReference type="ABCD" id="P13671">
    <property type="antibodies" value="9 sequenced antibodies"/>
</dbReference>
<dbReference type="Antibodypedia" id="10692">
    <property type="antibodies" value="311 antibodies from 34 providers"/>
</dbReference>
<dbReference type="DNASU" id="729"/>
<dbReference type="Ensembl" id="ENST00000263413.7">
    <property type="protein sequence ID" value="ENSP00000263413.3"/>
    <property type="gene ID" value="ENSG00000039537.16"/>
</dbReference>
<dbReference type="Ensembl" id="ENST00000337836.10">
    <property type="protein sequence ID" value="ENSP00000338861.5"/>
    <property type="gene ID" value="ENSG00000039537.16"/>
</dbReference>
<dbReference type="GeneID" id="729"/>
<dbReference type="KEGG" id="hsa:729"/>
<dbReference type="MANE-Select" id="ENST00000337836.10">
    <property type="protein sequence ID" value="ENSP00000338861.5"/>
    <property type="RefSeq nucleotide sequence ID" value="NM_000065.5"/>
    <property type="RefSeq protein sequence ID" value="NP_000056.2"/>
</dbReference>
<dbReference type="UCSC" id="uc003jmk.4">
    <property type="organism name" value="human"/>
</dbReference>
<dbReference type="AGR" id="HGNC:1339"/>
<dbReference type="CTD" id="729"/>
<dbReference type="DisGeNET" id="729"/>
<dbReference type="GeneCards" id="C6"/>
<dbReference type="HGNC" id="HGNC:1339">
    <property type="gene designation" value="C6"/>
</dbReference>
<dbReference type="HPA" id="ENSG00000039537">
    <property type="expression patterns" value="Tissue enriched (liver)"/>
</dbReference>
<dbReference type="MalaCards" id="C6"/>
<dbReference type="MIM" id="217050">
    <property type="type" value="gene"/>
</dbReference>
<dbReference type="MIM" id="612446">
    <property type="type" value="phenotype"/>
</dbReference>
<dbReference type="neXtProt" id="NX_P13671"/>
<dbReference type="OpenTargets" id="ENSG00000039537"/>
<dbReference type="Orphanet" id="169150">
    <property type="disease" value="Immunodeficiency due to a late component of complement deficiency"/>
</dbReference>
<dbReference type="PharmGKB" id="PA25921"/>
<dbReference type="VEuPathDB" id="HostDB:ENSG00000039537"/>
<dbReference type="eggNOG" id="ENOG502QPIM">
    <property type="taxonomic scope" value="Eukaryota"/>
</dbReference>
<dbReference type="GeneTree" id="ENSGT00940000156814"/>
<dbReference type="HOGENOM" id="CLU_014082_0_0_1"/>
<dbReference type="InParanoid" id="P13671"/>
<dbReference type="OMA" id="YYRKNFC"/>
<dbReference type="OrthoDB" id="9867095at2759"/>
<dbReference type="PAN-GO" id="P13671">
    <property type="GO annotations" value="3 GO annotations based on evolutionary models"/>
</dbReference>
<dbReference type="PhylomeDB" id="P13671"/>
<dbReference type="TreeFam" id="TF330498"/>
<dbReference type="PathwayCommons" id="P13671"/>
<dbReference type="Reactome" id="R-HSA-166665">
    <property type="pathway name" value="Terminal pathway of complement"/>
</dbReference>
<dbReference type="Reactome" id="R-HSA-977606">
    <property type="pathway name" value="Regulation of Complement cascade"/>
</dbReference>
<dbReference type="SignaLink" id="P13671"/>
<dbReference type="SIGNOR" id="P13671"/>
<dbReference type="BioGRID-ORCS" id="729">
    <property type="hits" value="11 hits in 1152 CRISPR screens"/>
</dbReference>
<dbReference type="ChiTaRS" id="C6">
    <property type="organism name" value="human"/>
</dbReference>
<dbReference type="EvolutionaryTrace" id="P13671"/>
<dbReference type="GeneWiki" id="Complement_component_6"/>
<dbReference type="GenomeRNAi" id="729"/>
<dbReference type="Pharos" id="P13671">
    <property type="development level" value="Tbio"/>
</dbReference>
<dbReference type="PRO" id="PR:P13671"/>
<dbReference type="Proteomes" id="UP000005640">
    <property type="component" value="Chromosome 5"/>
</dbReference>
<dbReference type="RNAct" id="P13671">
    <property type="molecule type" value="protein"/>
</dbReference>
<dbReference type="Bgee" id="ENSG00000039537">
    <property type="expression patterns" value="Expressed in right lobe of liver and 107 other cell types or tissues"/>
</dbReference>
<dbReference type="ExpressionAtlas" id="P13671">
    <property type="expression patterns" value="baseline and differential"/>
</dbReference>
<dbReference type="GO" id="GO:0070062">
    <property type="term" value="C:extracellular exosome"/>
    <property type="evidence" value="ECO:0007005"/>
    <property type="project" value="UniProtKB"/>
</dbReference>
<dbReference type="GO" id="GO:0005576">
    <property type="term" value="C:extracellular region"/>
    <property type="evidence" value="ECO:0000304"/>
    <property type="project" value="Reactome"/>
</dbReference>
<dbReference type="GO" id="GO:0005615">
    <property type="term" value="C:extracellular space"/>
    <property type="evidence" value="ECO:0000318"/>
    <property type="project" value="GO_Central"/>
</dbReference>
<dbReference type="GO" id="GO:0005579">
    <property type="term" value="C:membrane attack complex"/>
    <property type="evidence" value="ECO:0000314"/>
    <property type="project" value="UniProtKB"/>
</dbReference>
<dbReference type="GO" id="GO:0005886">
    <property type="term" value="C:plasma membrane"/>
    <property type="evidence" value="ECO:0000303"/>
    <property type="project" value="ComplexPortal"/>
</dbReference>
<dbReference type="GO" id="GO:0006956">
    <property type="term" value="P:complement activation"/>
    <property type="evidence" value="ECO:0000314"/>
    <property type="project" value="ComplexPortal"/>
</dbReference>
<dbReference type="GO" id="GO:0006958">
    <property type="term" value="P:complement activation, classical pathway"/>
    <property type="evidence" value="ECO:0007669"/>
    <property type="project" value="UniProtKB-KW"/>
</dbReference>
<dbReference type="GO" id="GO:0001701">
    <property type="term" value="P:in utero embryonic development"/>
    <property type="evidence" value="ECO:0007669"/>
    <property type="project" value="Ensembl"/>
</dbReference>
<dbReference type="GO" id="GO:0045087">
    <property type="term" value="P:innate immune response"/>
    <property type="evidence" value="ECO:0007669"/>
    <property type="project" value="UniProtKB-KW"/>
</dbReference>
<dbReference type="GO" id="GO:0031640">
    <property type="term" value="P:killing of cells of another organism"/>
    <property type="evidence" value="ECO:0007669"/>
    <property type="project" value="UniProtKB-KW"/>
</dbReference>
<dbReference type="GO" id="GO:0050778">
    <property type="term" value="P:positive regulation of immune response"/>
    <property type="evidence" value="ECO:0000303"/>
    <property type="project" value="ComplexPortal"/>
</dbReference>
<dbReference type="CDD" id="cd00033">
    <property type="entry name" value="CCP"/>
    <property type="match status" value="2"/>
</dbReference>
<dbReference type="CDD" id="cd00112">
    <property type="entry name" value="LDLa"/>
    <property type="match status" value="1"/>
</dbReference>
<dbReference type="FunFam" id="2.10.70.10:FF:000082">
    <property type="entry name" value="Complement component C6"/>
    <property type="match status" value="1"/>
</dbReference>
<dbReference type="FunFam" id="2.10.70.10:FF:000093">
    <property type="entry name" value="Complement component C6"/>
    <property type="match status" value="1"/>
</dbReference>
<dbReference type="FunFam" id="2.20.100.10:FF:000087">
    <property type="entry name" value="Complement component C6"/>
    <property type="match status" value="1"/>
</dbReference>
<dbReference type="FunFam" id="3.30.60.30:FF:000046">
    <property type="entry name" value="Complement component C6"/>
    <property type="match status" value="1"/>
</dbReference>
<dbReference type="FunFam" id="3.30.60.30:FF:000047">
    <property type="entry name" value="Complement component C6"/>
    <property type="match status" value="1"/>
</dbReference>
<dbReference type="FunFam" id="4.10.400.10:FF:000065">
    <property type="entry name" value="Transmembrane protease serine 7"/>
    <property type="match status" value="1"/>
</dbReference>
<dbReference type="FunFam" id="2.20.100.10:FF:000002">
    <property type="entry name" value="Unc-5 netrin receptor C"/>
    <property type="match status" value="1"/>
</dbReference>
<dbReference type="Gene3D" id="3.30.60.30">
    <property type="match status" value="2"/>
</dbReference>
<dbReference type="Gene3D" id="2.10.70.10">
    <property type="entry name" value="Complement Module, domain 1"/>
    <property type="match status" value="2"/>
</dbReference>
<dbReference type="Gene3D" id="4.10.400.10">
    <property type="entry name" value="Low-density Lipoprotein Receptor"/>
    <property type="match status" value="1"/>
</dbReference>
<dbReference type="Gene3D" id="2.20.100.10">
    <property type="entry name" value="Thrombospondin type-1 (TSP1) repeat"/>
    <property type="match status" value="3"/>
</dbReference>
<dbReference type="InterPro" id="IPR048828">
    <property type="entry name" value="C6_KAZAL"/>
</dbReference>
<dbReference type="InterPro" id="IPR048831">
    <property type="entry name" value="C8A_B_C6_EGF-like"/>
</dbReference>
<dbReference type="InterPro" id="IPR003884">
    <property type="entry name" value="FacI_MAC"/>
</dbReference>
<dbReference type="InterPro" id="IPR002350">
    <property type="entry name" value="Kazal_dom"/>
</dbReference>
<dbReference type="InterPro" id="IPR036055">
    <property type="entry name" value="LDL_receptor-like_sf"/>
</dbReference>
<dbReference type="InterPro" id="IPR023415">
    <property type="entry name" value="LDLR_class-A_CS"/>
</dbReference>
<dbReference type="InterPro" id="IPR002172">
    <property type="entry name" value="LDrepeatLR_classA_rpt"/>
</dbReference>
<dbReference type="InterPro" id="IPR001862">
    <property type="entry name" value="MAC_perforin"/>
</dbReference>
<dbReference type="InterPro" id="IPR020864">
    <property type="entry name" value="MACPF"/>
</dbReference>
<dbReference type="InterPro" id="IPR020863">
    <property type="entry name" value="MACPF_CS"/>
</dbReference>
<dbReference type="InterPro" id="IPR035976">
    <property type="entry name" value="Sushi/SCR/CCP_sf"/>
</dbReference>
<dbReference type="InterPro" id="IPR000436">
    <property type="entry name" value="Sushi_SCR_CCP_dom"/>
</dbReference>
<dbReference type="InterPro" id="IPR000884">
    <property type="entry name" value="TSP1_rpt"/>
</dbReference>
<dbReference type="InterPro" id="IPR036383">
    <property type="entry name" value="TSP1_rpt_sf"/>
</dbReference>
<dbReference type="PANTHER" id="PTHR45742">
    <property type="entry name" value="COMPLEMENT COMPONENT C6"/>
    <property type="match status" value="1"/>
</dbReference>
<dbReference type="PANTHER" id="PTHR45742:SF4">
    <property type="entry name" value="COMPLEMENT COMPONENT C6"/>
    <property type="match status" value="1"/>
</dbReference>
<dbReference type="Pfam" id="PF21195">
    <property type="entry name" value="EGF_C8A_B_C6"/>
    <property type="match status" value="1"/>
</dbReference>
<dbReference type="Pfam" id="PF21288">
    <property type="entry name" value="Kazal_C6"/>
    <property type="match status" value="1"/>
</dbReference>
<dbReference type="Pfam" id="PF00057">
    <property type="entry name" value="Ldl_recept_a"/>
    <property type="match status" value="1"/>
</dbReference>
<dbReference type="Pfam" id="PF01823">
    <property type="entry name" value="MACPF"/>
    <property type="match status" value="1"/>
</dbReference>
<dbReference type="Pfam" id="PF00084">
    <property type="entry name" value="Sushi"/>
    <property type="match status" value="2"/>
</dbReference>
<dbReference type="Pfam" id="PF00090">
    <property type="entry name" value="TSP_1"/>
    <property type="match status" value="3"/>
</dbReference>
<dbReference type="PRINTS" id="PR00764">
    <property type="entry name" value="COMPLEMENTC9"/>
</dbReference>
<dbReference type="SMART" id="SM00032">
    <property type="entry name" value="CCP"/>
    <property type="match status" value="2"/>
</dbReference>
<dbReference type="SMART" id="SM00057">
    <property type="entry name" value="FIMAC"/>
    <property type="match status" value="2"/>
</dbReference>
<dbReference type="SMART" id="SM00192">
    <property type="entry name" value="LDLa"/>
    <property type="match status" value="1"/>
</dbReference>
<dbReference type="SMART" id="SM00457">
    <property type="entry name" value="MACPF"/>
    <property type="match status" value="1"/>
</dbReference>
<dbReference type="SMART" id="SM00209">
    <property type="entry name" value="TSP1"/>
    <property type="match status" value="3"/>
</dbReference>
<dbReference type="SUPFAM" id="SSF57535">
    <property type="entry name" value="Complement control module/SCR domain"/>
    <property type="match status" value="2"/>
</dbReference>
<dbReference type="SUPFAM" id="SSF57424">
    <property type="entry name" value="LDL receptor-like module"/>
    <property type="match status" value="1"/>
</dbReference>
<dbReference type="SUPFAM" id="SSF82895">
    <property type="entry name" value="TSP-1 type 1 repeat"/>
    <property type="match status" value="3"/>
</dbReference>
<dbReference type="PROSITE" id="PS00022">
    <property type="entry name" value="EGF_1"/>
    <property type="match status" value="1"/>
</dbReference>
<dbReference type="PROSITE" id="PS51465">
    <property type="entry name" value="KAZAL_2"/>
    <property type="match status" value="2"/>
</dbReference>
<dbReference type="PROSITE" id="PS01209">
    <property type="entry name" value="LDLRA_1"/>
    <property type="match status" value="1"/>
</dbReference>
<dbReference type="PROSITE" id="PS50068">
    <property type="entry name" value="LDLRA_2"/>
    <property type="match status" value="1"/>
</dbReference>
<dbReference type="PROSITE" id="PS00279">
    <property type="entry name" value="MACPF_1"/>
    <property type="match status" value="1"/>
</dbReference>
<dbReference type="PROSITE" id="PS51412">
    <property type="entry name" value="MACPF_2"/>
    <property type="match status" value="1"/>
</dbReference>
<dbReference type="PROSITE" id="PS50923">
    <property type="entry name" value="SUSHI"/>
    <property type="match status" value="2"/>
</dbReference>
<dbReference type="PROSITE" id="PS50092">
    <property type="entry name" value="TSP1"/>
    <property type="match status" value="3"/>
</dbReference>
<comment type="function">
    <text evidence="10 12 14 15 18 20">Component of the membrane attack complex (MAC), a multiprotein complex activated by the complement cascade, which inserts into a target cell membrane and forms a pore, leading to target cell membrane rupture and cell lysis (PubMed:22267737, PubMed:22832194, PubMed:26841837, PubMed:27052168, PubMed:30552328). The MAC is initiated by proteolytic cleavage of C5 into complement C5b in response to the classical, alternative, lectin and GZMK complement pathways (PubMed:30552328). The complement pathways consist in a cascade of proteins that leads to phagocytosis and breakdown of pathogens and signaling that strengthens the adaptive immune system (PubMed:30552328). Together with component C5b, involved in MAC complex assembly: complement C5b and C6 associate with the outer leaflet of target cell membrane, reducing the energy for membrane bending (PubMed:30552328, PubMed:32569291).</text>
</comment>
<comment type="activity regulation">
    <text evidence="21 22">Membrane attack complex (MAC) assembly is inhibited by CD59, thereby protecting self-cells from damage during complement activation (PubMed:36797260). MAC assembly is also inhibited by clusterin (CLU) chaperones that inhibit polymerization of C9 (PubMed:34667172).</text>
</comment>
<comment type="subunit">
    <text evidence="10 11 12 14 15 18 19 20">Component of the membrane attack complex (MAC), composed of complement C5b, C6, C7, C8A, C8B, C8G and multiple copies of the pore-forming subunit C9.</text>
</comment>
<comment type="interaction">
    <interactant intactId="EBI-1753221">
        <id>P13671</id>
    </interactant>
    <interactant intactId="EBI-389883">
        <id>P16333</id>
        <label>NCK1</label>
    </interactant>
    <organismsDiffer>false</organismsDiffer>
    <experiments>2</experiments>
</comment>
<comment type="subcellular location">
    <subcellularLocation>
        <location evidence="17">Secreted</location>
    </subcellularLocation>
    <subcellularLocation>
        <location evidence="18 19 20">Target cell membrane</location>
        <topology evidence="18">Multi-pass membrane protein</topology>
    </subcellularLocation>
    <text evidence="17 18 19">Secreted as soluble protein (PubMed:2808363). Inserts into the cell membrane of target cells (PubMed:30552328, PubMed:31061395).</text>
</comment>
<comment type="PTM">
    <text evidence="25">All cysteine residues are assumed to be cross-linked to one another. Individual modules containing an even number of conserved cysteine residues are supposed to have disulfide linkages only within the same module.</text>
</comment>
<comment type="polymorphism">
    <text evidence="23">The sequence shown is that of allotype C6 B.</text>
</comment>
<comment type="disease" evidence="8">
    <disease id="DI-01375">
        <name>Complement component 6 deficiency</name>
        <acronym>C6D</acronym>
        <description>A rare defect of the complement classical pathway associated with susceptibility to severe recurrent infections, predominantly by Neisseria gonorrhoeae or Neisseria meningitidis.</description>
        <dbReference type="MIM" id="612446"/>
    </disease>
    <text>Disease susceptibility is associated with variants affecting the gene represented in this entry.</text>
</comment>
<comment type="similarity">
    <text evidence="27">Belongs to the complement C6/C7/C8/C9 family.</text>
</comment>
<comment type="online information" name="C6">
    <link uri="https://databases.lovd.nl/shared/genes/C6"/>
    <text>complement component 6</text>
</comment>
<proteinExistence type="evidence at protein level"/>
<accession>P13671</accession>
<evidence type="ECO:0000255" key="1">
    <source>
        <dbReference type="PROSITE-ProRule" id="PRU00124"/>
    </source>
</evidence>
<evidence type="ECO:0000255" key="2">
    <source>
        <dbReference type="PROSITE-ProRule" id="PRU00210"/>
    </source>
</evidence>
<evidence type="ECO:0000255" key="3">
    <source>
        <dbReference type="PROSITE-ProRule" id="PRU00302"/>
    </source>
</evidence>
<evidence type="ECO:0000255" key="4">
    <source>
        <dbReference type="PROSITE-ProRule" id="PRU00745"/>
    </source>
</evidence>
<evidence type="ECO:0000255" key="5">
    <source>
        <dbReference type="PROSITE-ProRule" id="PRU00798"/>
    </source>
</evidence>
<evidence type="ECO:0000269" key="6">
    <source>
    </source>
</evidence>
<evidence type="ECO:0000269" key="7">
    <source>
    </source>
</evidence>
<evidence type="ECO:0000269" key="8">
    <source>
    </source>
</evidence>
<evidence type="ECO:0000269" key="9">
    <source>
    </source>
</evidence>
<evidence type="ECO:0000269" key="10">
    <source>
    </source>
</evidence>
<evidence type="ECO:0000269" key="11">
    <source>
    </source>
</evidence>
<evidence type="ECO:0000269" key="12">
    <source>
    </source>
</evidence>
<evidence type="ECO:0000269" key="13">
    <source>
    </source>
</evidence>
<evidence type="ECO:0000269" key="14">
    <source>
    </source>
</evidence>
<evidence type="ECO:0000269" key="15">
    <source>
    </source>
</evidence>
<evidence type="ECO:0000269" key="16">
    <source>
    </source>
</evidence>
<evidence type="ECO:0000269" key="17">
    <source>
    </source>
</evidence>
<evidence type="ECO:0000269" key="18">
    <source>
    </source>
</evidence>
<evidence type="ECO:0000269" key="19">
    <source>
    </source>
</evidence>
<evidence type="ECO:0000269" key="20">
    <source>
    </source>
</evidence>
<evidence type="ECO:0000269" key="21">
    <source>
    </source>
</evidence>
<evidence type="ECO:0000269" key="22">
    <source>
    </source>
</evidence>
<evidence type="ECO:0000269" key="23">
    <source>
    </source>
</evidence>
<evidence type="ECO:0000269" key="24">
    <source>
    </source>
</evidence>
<evidence type="ECO:0000269" key="25">
    <source>
    </source>
</evidence>
<evidence type="ECO:0000303" key="26">
    <source>
    </source>
</evidence>
<evidence type="ECO:0000305" key="27"/>
<evidence type="ECO:0000305" key="28">
    <source>
    </source>
</evidence>
<evidence type="ECO:0000312" key="29">
    <source>
        <dbReference type="HGNC" id="HGNC:1339"/>
    </source>
</evidence>
<evidence type="ECO:0007744" key="30">
    <source>
        <dbReference type="PDB" id="3T5O"/>
    </source>
</evidence>
<evidence type="ECO:0007744" key="31">
    <source>
        <dbReference type="PDB" id="4A5W"/>
    </source>
</evidence>
<evidence type="ECO:0007744" key="32">
    <source>
        <dbReference type="PDB" id="4E0S"/>
    </source>
</evidence>
<evidence type="ECO:0007744" key="33">
    <source>
        <dbReference type="PDB" id="6H03"/>
    </source>
</evidence>
<evidence type="ECO:0007744" key="34">
    <source>
        <dbReference type="PDB" id="6H04"/>
    </source>
</evidence>
<evidence type="ECO:0007744" key="35">
    <source>
        <dbReference type="PDB" id="7NYC"/>
    </source>
</evidence>
<evidence type="ECO:0007744" key="36">
    <source>
        <dbReference type="PDB" id="7NYD"/>
    </source>
</evidence>
<evidence type="ECO:0007744" key="37">
    <source>
        <dbReference type="PDB" id="8B0F"/>
    </source>
</evidence>
<evidence type="ECO:0007744" key="38">
    <source>
        <dbReference type="PDB" id="8B0G"/>
    </source>
</evidence>
<evidence type="ECO:0007744" key="39">
    <source>
        <dbReference type="PDB" id="8B0H"/>
    </source>
</evidence>
<evidence type="ECO:0007829" key="40">
    <source>
        <dbReference type="PDB" id="3T5O"/>
    </source>
</evidence>
<evidence type="ECO:0007829" key="41">
    <source>
        <dbReference type="PDB" id="4A5W"/>
    </source>
</evidence>
<evidence type="ECO:0007829" key="42">
    <source>
        <dbReference type="PDB" id="7NYD"/>
    </source>
</evidence>
<evidence type="ECO:0007829" key="43">
    <source>
        <dbReference type="PDB" id="7Q6C"/>
    </source>
</evidence>
<name>CO6_HUMAN</name>
<sequence>MARRSVLYFILLNALINKGQACFCDHYAWTQWTSCSKTCNSGTQSRHRQIVVDKYYQENFCEQICSKQETRECNWQRCPINCLLGDFGPWSDCDPCIEKQSKVRSVLRPSQFGGQPCTAPLVAFQPCIPSKLCKIEEADCKNKFRCDSGRCIARKLECNGENDCGDNSDERDCGRTKAVCTRKYNPIPSVQLMGNGFHFLAGEPRGEVLDNSFTGGICKTVKSSRTSNPYRVPANLENVGFEVQTAEDDLKTDFYKDLTSLGHNENQQGSFSSQGGSSFSVPIFYSSKRSENINHNSAFKQAIQASHKKDSSFIRIHKVMKVLNFTTKAKDLHLSDVFLKALNHLPLEYNSALYSRIFDDFGTHYFTSGSLGGVYDLLYQFSSEELKNSGLTEEEAKHCVRIETKKRVLFAKKTKVEHRCTTNKLSEKHEGSFIQGAEKSISLIRGGRSEYGAALAWEKGSSGLEEKTFSEWLESVKENPAVIDFELAPIVDLVRNIPCAVTKRNNLRKALQEYAAKFDPCQCAPCPNNGRPTLSGTECLCVCQSGTYGENCEKQSPDYKSNAVDGQWGCWSSWSTCDATYKRSRTRECNNPAPQRGGKRCEGEKRQEEDCTFSIMENNGQPCINDDEEMKEVDLPEIEADSGCPQPVPPENGFIRNEKQLYLVGEDVEISCLTGFETVGYQYFRCLPDGTWRQGDVECQRTECIKPVVQEVLTITPFQRLYRIGESIELTCPKGFVVAGPSRYTCQGNSWTPPISNSLTCEKDTLTKLKGHCQLGQKQSGSECICMSPEEDCSHHSEDLCVFDTDSNDYFTSPACKFLAEKCLNNQQLHFLHIGSCQDGRQLEWGLERTRLSSNSTKKESCGYDTCYDWEKCSASTSKCVCLLPPQCFKGGNQLYCVKMGSSTSEKTLNICEVGTIRCANRKMEILHPGKCLA</sequence>
<organism>
    <name type="scientific">Homo sapiens</name>
    <name type="common">Human</name>
    <dbReference type="NCBI Taxonomy" id="9606"/>
    <lineage>
        <taxon>Eukaryota</taxon>
        <taxon>Metazoa</taxon>
        <taxon>Chordata</taxon>
        <taxon>Craniata</taxon>
        <taxon>Vertebrata</taxon>
        <taxon>Euteleostomi</taxon>
        <taxon>Mammalia</taxon>
        <taxon>Eutheria</taxon>
        <taxon>Euarchontoglires</taxon>
        <taxon>Primates</taxon>
        <taxon>Haplorrhini</taxon>
        <taxon>Catarrhini</taxon>
        <taxon>Hominidae</taxon>
        <taxon>Homo</taxon>
    </lineage>
</organism>
<protein>
    <recommendedName>
        <fullName>Complement component C6</fullName>
    </recommendedName>
</protein>